<feature type="chain" id="PRO_1000081710" description="dTTP/UTP pyrophosphatase">
    <location>
        <begin position="1"/>
        <end position="188"/>
    </location>
</feature>
<feature type="active site" description="Proton acceptor" evidence="1">
    <location>
        <position position="70"/>
    </location>
</feature>
<feature type="site" description="Important for substrate specificity" evidence="1">
    <location>
        <position position="11"/>
    </location>
</feature>
<feature type="site" description="Important for substrate specificity" evidence="1">
    <location>
        <position position="71"/>
    </location>
</feature>
<feature type="site" description="Important for substrate specificity" evidence="1">
    <location>
        <position position="155"/>
    </location>
</feature>
<keyword id="KW-0963">Cytoplasm</keyword>
<keyword id="KW-0378">Hydrolase</keyword>
<keyword id="KW-0546">Nucleotide metabolism</keyword>
<evidence type="ECO:0000255" key="1">
    <source>
        <dbReference type="HAMAP-Rule" id="MF_00528"/>
    </source>
</evidence>
<name>NTPPA_CLOB8</name>
<accession>A6LQP7</accession>
<proteinExistence type="inferred from homology"/>
<sequence>MKVILASASERRQELLSRLIKTFDVIVSNFDESKVIFEGSIDRYVKDIALGKAMNIKNKLDEDAIIISADTVVTIDNMILGKPRDEEDAFNIIKSLQGRKHLVYSGVVVINTAKNLTIQESLSTEVTFSEISDDEILEYIKTGEPLDKAGAYGIQGIGGIFVEEIRGCYYNVVGLPLNKLKFMLKEIQ</sequence>
<gene>
    <name type="ordered locus">Cbei_0489</name>
</gene>
<organism>
    <name type="scientific">Clostridium beijerinckii (strain ATCC 51743 / NCIMB 8052)</name>
    <name type="common">Clostridium acetobutylicum</name>
    <dbReference type="NCBI Taxonomy" id="290402"/>
    <lineage>
        <taxon>Bacteria</taxon>
        <taxon>Bacillati</taxon>
        <taxon>Bacillota</taxon>
        <taxon>Clostridia</taxon>
        <taxon>Eubacteriales</taxon>
        <taxon>Clostridiaceae</taxon>
        <taxon>Clostridium</taxon>
    </lineage>
</organism>
<dbReference type="EC" id="3.6.1.9" evidence="1"/>
<dbReference type="EMBL" id="CP000721">
    <property type="protein sequence ID" value="ABR32677.1"/>
    <property type="molecule type" value="Genomic_DNA"/>
</dbReference>
<dbReference type="RefSeq" id="WP_011967838.1">
    <property type="nucleotide sequence ID" value="NC_009617.1"/>
</dbReference>
<dbReference type="SMR" id="A6LQP7"/>
<dbReference type="KEGG" id="cbe:Cbei_0489"/>
<dbReference type="eggNOG" id="COG0424">
    <property type="taxonomic scope" value="Bacteria"/>
</dbReference>
<dbReference type="HOGENOM" id="CLU_040416_0_0_9"/>
<dbReference type="Proteomes" id="UP000000565">
    <property type="component" value="Chromosome"/>
</dbReference>
<dbReference type="GO" id="GO:0005737">
    <property type="term" value="C:cytoplasm"/>
    <property type="evidence" value="ECO:0007669"/>
    <property type="project" value="UniProtKB-SubCell"/>
</dbReference>
<dbReference type="GO" id="GO:0036218">
    <property type="term" value="F:dTTP diphosphatase activity"/>
    <property type="evidence" value="ECO:0007669"/>
    <property type="project" value="RHEA"/>
</dbReference>
<dbReference type="GO" id="GO:0036221">
    <property type="term" value="F:UTP diphosphatase activity"/>
    <property type="evidence" value="ECO:0007669"/>
    <property type="project" value="RHEA"/>
</dbReference>
<dbReference type="GO" id="GO:0009117">
    <property type="term" value="P:nucleotide metabolic process"/>
    <property type="evidence" value="ECO:0007669"/>
    <property type="project" value="UniProtKB-KW"/>
</dbReference>
<dbReference type="CDD" id="cd00555">
    <property type="entry name" value="Maf"/>
    <property type="match status" value="1"/>
</dbReference>
<dbReference type="Gene3D" id="3.90.950.10">
    <property type="match status" value="1"/>
</dbReference>
<dbReference type="HAMAP" id="MF_00528">
    <property type="entry name" value="Maf"/>
    <property type="match status" value="1"/>
</dbReference>
<dbReference type="InterPro" id="IPR029001">
    <property type="entry name" value="ITPase-like_fam"/>
</dbReference>
<dbReference type="InterPro" id="IPR003697">
    <property type="entry name" value="Maf-like"/>
</dbReference>
<dbReference type="NCBIfam" id="TIGR00172">
    <property type="entry name" value="maf"/>
    <property type="match status" value="1"/>
</dbReference>
<dbReference type="NCBIfam" id="NF000867">
    <property type="entry name" value="PRK00078.1"/>
    <property type="match status" value="1"/>
</dbReference>
<dbReference type="PANTHER" id="PTHR43213">
    <property type="entry name" value="BIFUNCTIONAL DTTP/UTP PYROPHOSPHATASE/METHYLTRANSFERASE PROTEIN-RELATED"/>
    <property type="match status" value="1"/>
</dbReference>
<dbReference type="PANTHER" id="PTHR43213:SF5">
    <property type="entry name" value="BIFUNCTIONAL DTTP_UTP PYROPHOSPHATASE_METHYLTRANSFERASE PROTEIN-RELATED"/>
    <property type="match status" value="1"/>
</dbReference>
<dbReference type="Pfam" id="PF02545">
    <property type="entry name" value="Maf"/>
    <property type="match status" value="1"/>
</dbReference>
<dbReference type="PIRSF" id="PIRSF006305">
    <property type="entry name" value="Maf"/>
    <property type="match status" value="1"/>
</dbReference>
<dbReference type="SUPFAM" id="SSF52972">
    <property type="entry name" value="ITPase-like"/>
    <property type="match status" value="1"/>
</dbReference>
<protein>
    <recommendedName>
        <fullName evidence="1">dTTP/UTP pyrophosphatase</fullName>
        <shortName evidence="1">dTTPase/UTPase</shortName>
        <ecNumber evidence="1">3.6.1.9</ecNumber>
    </recommendedName>
    <alternativeName>
        <fullName evidence="1">Nucleoside triphosphate pyrophosphatase</fullName>
    </alternativeName>
    <alternativeName>
        <fullName evidence="1">Nucleotide pyrophosphatase</fullName>
        <shortName evidence="1">Nucleotide PPase</shortName>
    </alternativeName>
</protein>
<comment type="function">
    <text evidence="1">Nucleoside triphosphate pyrophosphatase that hydrolyzes dTTP and UTP. May have a dual role in cell division arrest and in preventing the incorporation of modified nucleotides into cellular nucleic acids.</text>
</comment>
<comment type="catalytic activity">
    <reaction evidence="1">
        <text>dTTP + H2O = dTMP + diphosphate + H(+)</text>
        <dbReference type="Rhea" id="RHEA:28534"/>
        <dbReference type="ChEBI" id="CHEBI:15377"/>
        <dbReference type="ChEBI" id="CHEBI:15378"/>
        <dbReference type="ChEBI" id="CHEBI:33019"/>
        <dbReference type="ChEBI" id="CHEBI:37568"/>
        <dbReference type="ChEBI" id="CHEBI:63528"/>
        <dbReference type="EC" id="3.6.1.9"/>
    </reaction>
</comment>
<comment type="catalytic activity">
    <reaction evidence="1">
        <text>UTP + H2O = UMP + diphosphate + H(+)</text>
        <dbReference type="Rhea" id="RHEA:29395"/>
        <dbReference type="ChEBI" id="CHEBI:15377"/>
        <dbReference type="ChEBI" id="CHEBI:15378"/>
        <dbReference type="ChEBI" id="CHEBI:33019"/>
        <dbReference type="ChEBI" id="CHEBI:46398"/>
        <dbReference type="ChEBI" id="CHEBI:57865"/>
        <dbReference type="EC" id="3.6.1.9"/>
    </reaction>
</comment>
<comment type="cofactor">
    <cofactor evidence="1">
        <name>a divalent metal cation</name>
        <dbReference type="ChEBI" id="CHEBI:60240"/>
    </cofactor>
</comment>
<comment type="subcellular location">
    <subcellularLocation>
        <location evidence="1">Cytoplasm</location>
    </subcellularLocation>
</comment>
<comment type="similarity">
    <text evidence="1">Belongs to the Maf family. YhdE subfamily.</text>
</comment>
<reference key="1">
    <citation type="submission" date="2007-06" db="EMBL/GenBank/DDBJ databases">
        <title>Complete sequence of Clostridium beijerinckii NCIMB 8052.</title>
        <authorList>
            <consortium name="US DOE Joint Genome Institute"/>
            <person name="Copeland A."/>
            <person name="Lucas S."/>
            <person name="Lapidus A."/>
            <person name="Barry K."/>
            <person name="Detter J.C."/>
            <person name="Glavina del Rio T."/>
            <person name="Hammon N."/>
            <person name="Israni S."/>
            <person name="Dalin E."/>
            <person name="Tice H."/>
            <person name="Pitluck S."/>
            <person name="Sims D."/>
            <person name="Brettin T."/>
            <person name="Bruce D."/>
            <person name="Tapia R."/>
            <person name="Brainard J."/>
            <person name="Schmutz J."/>
            <person name="Larimer F."/>
            <person name="Land M."/>
            <person name="Hauser L."/>
            <person name="Kyrpides N."/>
            <person name="Mikhailova N."/>
            <person name="Bennet G."/>
            <person name="Cann I."/>
            <person name="Chen J.-S."/>
            <person name="Contreras A.L."/>
            <person name="Jones D."/>
            <person name="Kashket E."/>
            <person name="Mitchell W."/>
            <person name="Stoddard S."/>
            <person name="Schwarz W."/>
            <person name="Qureshi N."/>
            <person name="Young M."/>
            <person name="Shi Z."/>
            <person name="Ezeji T."/>
            <person name="White B."/>
            <person name="Blaschek H."/>
            <person name="Richardson P."/>
        </authorList>
    </citation>
    <scope>NUCLEOTIDE SEQUENCE [LARGE SCALE GENOMIC DNA]</scope>
    <source>
        <strain>ATCC 51743 / NCIMB 8052</strain>
    </source>
</reference>